<protein>
    <recommendedName>
        <fullName evidence="1">Chaperone protein HtpG</fullName>
    </recommendedName>
    <alternativeName>
        <fullName evidence="1">Heat shock protein HtpG</fullName>
    </alternativeName>
    <alternativeName>
        <fullName evidence="1">High temperature protein G</fullName>
    </alternativeName>
</protein>
<keyword id="KW-0067">ATP-binding</keyword>
<keyword id="KW-0143">Chaperone</keyword>
<keyword id="KW-0963">Cytoplasm</keyword>
<keyword id="KW-0547">Nucleotide-binding</keyword>
<keyword id="KW-1185">Reference proteome</keyword>
<keyword id="KW-0346">Stress response</keyword>
<evidence type="ECO:0000255" key="1">
    <source>
        <dbReference type="HAMAP-Rule" id="MF_00505"/>
    </source>
</evidence>
<name>HTPG_RICPR</name>
<organism>
    <name type="scientific">Rickettsia prowazekii (strain Madrid E)</name>
    <dbReference type="NCBI Taxonomy" id="272947"/>
    <lineage>
        <taxon>Bacteria</taxon>
        <taxon>Pseudomonadati</taxon>
        <taxon>Pseudomonadota</taxon>
        <taxon>Alphaproteobacteria</taxon>
        <taxon>Rickettsiales</taxon>
        <taxon>Rickettsiaceae</taxon>
        <taxon>Rickettsieae</taxon>
        <taxon>Rickettsia</taxon>
        <taxon>typhus group</taxon>
    </lineage>
</organism>
<sequence length="621" mass="70713">MTQEKKKFDAEVGKILNLMIHSLYSNKEIFMRELISNASDACDKLRYLSQSNSELIAGDSNFKIIVKVDKDNGQIIIRDNGIGMNKEDLIENLGTIARSGTANFLKNLSGDSKKDNMLIGQFGVGFYSSFMVADKVTVTSRKAGESKVHTWESDGLGEYIVADSEQEFTRGTEIVLYIKKSETTFLDHFRLKHIVKSYSDHIAVPIYFCDEAGNNEIQLNSASALWTRPKSEITEDQYKEFYKSLSYAVDDPWVTLHNKNEGAIEFTNLLFIPSSKTFDLFHPDRKKRVKLYIKRVFISDENIDLIPSYLRFLRGVVDSEDLPLNISRESLQHNNVLEKIKNAITKRVLGELRKKKEELPEEYNKFWTNFGGALKEGLCEATTDHEKLLEVCIFRSALHNKMISIDEYIANFKEGQNTIYYLSGDNPDKLLSSPQIEGLLNKNIDVLLFTDTVDDFWVNVNSEYKGYAIKSATRSDIDVEQTTSQPKDKNTDSKKSDNEYKLLTDYFKEILGELVKEVKISKKLTLSPACLAVSDTAMDIRMERFLIEQKQIANASAKNLELNPKNKIIEKIFNDLKANNKNNNELVNLIFDQACILEGEPVADTGAFSKRLNDILQKAIL</sequence>
<comment type="function">
    <text evidence="1">Molecular chaperone. Has ATPase activity.</text>
</comment>
<comment type="subunit">
    <text evidence="1">Homodimer.</text>
</comment>
<comment type="subcellular location">
    <subcellularLocation>
        <location evidence="1">Cytoplasm</location>
    </subcellularLocation>
</comment>
<comment type="similarity">
    <text evidence="1">Belongs to the heat shock protein 90 family.</text>
</comment>
<accession>Q9ZCB9</accession>
<reference key="1">
    <citation type="journal article" date="1998" name="Nature">
        <title>The genome sequence of Rickettsia prowazekii and the origin of mitochondria.</title>
        <authorList>
            <person name="Andersson S.G.E."/>
            <person name="Zomorodipour A."/>
            <person name="Andersson J.O."/>
            <person name="Sicheritz-Ponten T."/>
            <person name="Alsmark U.C.M."/>
            <person name="Podowski R.M."/>
            <person name="Naeslund A.K."/>
            <person name="Eriksson A.-S."/>
            <person name="Winkler H.H."/>
            <person name="Kurland C.G."/>
        </authorList>
    </citation>
    <scope>NUCLEOTIDE SEQUENCE [LARGE SCALE GENOMIC DNA]</scope>
    <source>
        <strain>Madrid E</strain>
    </source>
</reference>
<proteinExistence type="inferred from homology"/>
<gene>
    <name evidence="1" type="primary">htpG</name>
    <name type="ordered locus">RP840</name>
</gene>
<dbReference type="EMBL" id="AJ235273">
    <property type="protein sequence ID" value="CAA15264.1"/>
    <property type="molecule type" value="Genomic_DNA"/>
</dbReference>
<dbReference type="PIR" id="H71645">
    <property type="entry name" value="H71645"/>
</dbReference>
<dbReference type="RefSeq" id="NP_221188.1">
    <property type="nucleotide sequence ID" value="NC_000963.1"/>
</dbReference>
<dbReference type="RefSeq" id="WP_004599674.1">
    <property type="nucleotide sequence ID" value="NC_000963.1"/>
</dbReference>
<dbReference type="SMR" id="Q9ZCB9"/>
<dbReference type="STRING" id="272947.gene:17555909"/>
<dbReference type="EnsemblBacteria" id="CAA15264">
    <property type="protein sequence ID" value="CAA15264"/>
    <property type="gene ID" value="CAA15264"/>
</dbReference>
<dbReference type="GeneID" id="57569963"/>
<dbReference type="KEGG" id="rpr:RP840"/>
<dbReference type="PATRIC" id="fig|272947.5.peg.878"/>
<dbReference type="eggNOG" id="COG0326">
    <property type="taxonomic scope" value="Bacteria"/>
</dbReference>
<dbReference type="HOGENOM" id="CLU_006684_3_0_5"/>
<dbReference type="OrthoDB" id="9802640at2"/>
<dbReference type="Proteomes" id="UP000002480">
    <property type="component" value="Chromosome"/>
</dbReference>
<dbReference type="GO" id="GO:0005737">
    <property type="term" value="C:cytoplasm"/>
    <property type="evidence" value="ECO:0007669"/>
    <property type="project" value="UniProtKB-SubCell"/>
</dbReference>
<dbReference type="GO" id="GO:0005524">
    <property type="term" value="F:ATP binding"/>
    <property type="evidence" value="ECO:0007669"/>
    <property type="project" value="UniProtKB-UniRule"/>
</dbReference>
<dbReference type="GO" id="GO:0016887">
    <property type="term" value="F:ATP hydrolysis activity"/>
    <property type="evidence" value="ECO:0007669"/>
    <property type="project" value="InterPro"/>
</dbReference>
<dbReference type="GO" id="GO:0140662">
    <property type="term" value="F:ATP-dependent protein folding chaperone"/>
    <property type="evidence" value="ECO:0007669"/>
    <property type="project" value="InterPro"/>
</dbReference>
<dbReference type="GO" id="GO:0051082">
    <property type="term" value="F:unfolded protein binding"/>
    <property type="evidence" value="ECO:0007669"/>
    <property type="project" value="UniProtKB-UniRule"/>
</dbReference>
<dbReference type="CDD" id="cd16927">
    <property type="entry name" value="HATPase_Hsp90-like"/>
    <property type="match status" value="1"/>
</dbReference>
<dbReference type="FunFam" id="3.30.565.10:FF:000009">
    <property type="entry name" value="Molecular chaperone HtpG"/>
    <property type="match status" value="1"/>
</dbReference>
<dbReference type="Gene3D" id="3.30.230.80">
    <property type="match status" value="1"/>
</dbReference>
<dbReference type="Gene3D" id="3.40.50.11260">
    <property type="match status" value="1"/>
</dbReference>
<dbReference type="Gene3D" id="1.20.120.790">
    <property type="entry name" value="Heat shock protein 90, C-terminal domain"/>
    <property type="match status" value="1"/>
</dbReference>
<dbReference type="Gene3D" id="3.30.565.10">
    <property type="entry name" value="Histidine kinase-like ATPase, C-terminal domain"/>
    <property type="match status" value="1"/>
</dbReference>
<dbReference type="HAMAP" id="MF_00505">
    <property type="entry name" value="HSP90"/>
    <property type="match status" value="1"/>
</dbReference>
<dbReference type="InterPro" id="IPR036890">
    <property type="entry name" value="HATPase_C_sf"/>
</dbReference>
<dbReference type="InterPro" id="IPR019805">
    <property type="entry name" value="Heat_shock_protein_90_CS"/>
</dbReference>
<dbReference type="InterPro" id="IPR037196">
    <property type="entry name" value="HSP90_C"/>
</dbReference>
<dbReference type="InterPro" id="IPR001404">
    <property type="entry name" value="Hsp90_fam"/>
</dbReference>
<dbReference type="InterPro" id="IPR020575">
    <property type="entry name" value="Hsp90_N"/>
</dbReference>
<dbReference type="InterPro" id="IPR020568">
    <property type="entry name" value="Ribosomal_Su5_D2-typ_SF"/>
</dbReference>
<dbReference type="NCBIfam" id="NF003555">
    <property type="entry name" value="PRK05218.1"/>
    <property type="match status" value="1"/>
</dbReference>
<dbReference type="PANTHER" id="PTHR11528">
    <property type="entry name" value="HEAT SHOCK PROTEIN 90 FAMILY MEMBER"/>
    <property type="match status" value="1"/>
</dbReference>
<dbReference type="Pfam" id="PF13589">
    <property type="entry name" value="HATPase_c_3"/>
    <property type="match status" value="1"/>
</dbReference>
<dbReference type="Pfam" id="PF00183">
    <property type="entry name" value="HSP90"/>
    <property type="match status" value="1"/>
</dbReference>
<dbReference type="PIRSF" id="PIRSF002583">
    <property type="entry name" value="Hsp90"/>
    <property type="match status" value="1"/>
</dbReference>
<dbReference type="PRINTS" id="PR00775">
    <property type="entry name" value="HEATSHOCK90"/>
</dbReference>
<dbReference type="SMART" id="SM00387">
    <property type="entry name" value="HATPase_c"/>
    <property type="match status" value="1"/>
</dbReference>
<dbReference type="SUPFAM" id="SSF55874">
    <property type="entry name" value="ATPase domain of HSP90 chaperone/DNA topoisomerase II/histidine kinase"/>
    <property type="match status" value="1"/>
</dbReference>
<dbReference type="SUPFAM" id="SSF110942">
    <property type="entry name" value="HSP90 C-terminal domain"/>
    <property type="match status" value="1"/>
</dbReference>
<dbReference type="SUPFAM" id="SSF54211">
    <property type="entry name" value="Ribosomal protein S5 domain 2-like"/>
    <property type="match status" value="1"/>
</dbReference>
<dbReference type="PROSITE" id="PS00298">
    <property type="entry name" value="HSP90"/>
    <property type="match status" value="1"/>
</dbReference>
<feature type="chain" id="PRO_0000063011" description="Chaperone protein HtpG">
    <location>
        <begin position="1"/>
        <end position="621"/>
    </location>
</feature>
<feature type="region of interest" description="A; substrate-binding" evidence="1">
    <location>
        <begin position="1"/>
        <end position="328"/>
    </location>
</feature>
<feature type="region of interest" description="B" evidence="1">
    <location>
        <begin position="329"/>
        <end position="544"/>
    </location>
</feature>
<feature type="region of interest" description="C" evidence="1">
    <location>
        <begin position="545"/>
        <end position="621"/>
    </location>
</feature>